<protein>
    <recommendedName>
        <fullName evidence="1">Photosystem II protein D1</fullName>
        <shortName evidence="1">PSII D1 protein</shortName>
        <ecNumber evidence="1">1.10.3.9</ecNumber>
    </recommendedName>
    <alternativeName>
        <fullName evidence="1">Photosystem II Q(B) protein</fullName>
    </alternativeName>
</protein>
<sequence length="353" mass="38977">MTAILERRESESLWGRFCNWITSTENRLYIGWFGVLMIPTLLTATSVFIIAFIAAPPVDIDGIREPVSGSLLYGNNIISGAIIPTSAAIGLHFYPIWEAASVDEWLYNGGPYELIVLHFLLGVACYMGREWELSFRLGMRPWIAVAYSAPVAAATAVFLIYPIGQGSFSDGMPLGISGTFNFMIVFQAEHNILMHPFHMLGVAGVFGGSLFSAMHGSLVTSSLIRETTENESANEGYRFGQEEETYNIVAAHGYFGRLIFQYASFNNSRSLHFFLAAWPVVGIWFTALGISTMAFNLNGFNFNQSVVDSQGRVINTWADIINRANLGMEVMHERNAHNFPLDLAAVEVPSING</sequence>
<feature type="initiator methionine" description="Removed" evidence="1">
    <location>
        <position position="1"/>
    </location>
</feature>
<feature type="chain" id="PRO_0000339980" description="Photosystem II protein D1" evidence="1">
    <location>
        <begin position="2"/>
        <end position="344"/>
    </location>
</feature>
<feature type="propeptide" id="PRO_0000339981" evidence="1">
    <location>
        <begin position="345"/>
        <end position="353"/>
    </location>
</feature>
<feature type="transmembrane region" description="Helical" evidence="1">
    <location>
        <begin position="29"/>
        <end position="46"/>
    </location>
</feature>
<feature type="transmembrane region" description="Helical" evidence="1">
    <location>
        <begin position="118"/>
        <end position="133"/>
    </location>
</feature>
<feature type="transmembrane region" description="Helical" evidence="1">
    <location>
        <begin position="142"/>
        <end position="156"/>
    </location>
</feature>
<feature type="transmembrane region" description="Helical" evidence="1">
    <location>
        <begin position="197"/>
        <end position="218"/>
    </location>
</feature>
<feature type="transmembrane region" description="Helical" evidence="1">
    <location>
        <begin position="274"/>
        <end position="288"/>
    </location>
</feature>
<feature type="binding site" description="axial binding residue" evidence="1">
    <location>
        <position position="118"/>
    </location>
    <ligand>
        <name>chlorophyll a</name>
        <dbReference type="ChEBI" id="CHEBI:58416"/>
        <label>ChlzD1</label>
    </ligand>
    <ligandPart>
        <name>Mg</name>
        <dbReference type="ChEBI" id="CHEBI:25107"/>
    </ligandPart>
</feature>
<feature type="binding site" evidence="1">
    <location>
        <position position="126"/>
    </location>
    <ligand>
        <name>pheophytin a</name>
        <dbReference type="ChEBI" id="CHEBI:136840"/>
        <label>D1</label>
    </ligand>
</feature>
<feature type="binding site" evidence="1">
    <location>
        <position position="170"/>
    </location>
    <ligand>
        <name>[CaMn4O5] cluster</name>
        <dbReference type="ChEBI" id="CHEBI:189552"/>
    </ligand>
</feature>
<feature type="binding site" evidence="1">
    <location>
        <position position="189"/>
    </location>
    <ligand>
        <name>[CaMn4O5] cluster</name>
        <dbReference type="ChEBI" id="CHEBI:189552"/>
    </ligand>
</feature>
<feature type="binding site" description="axial binding residue" evidence="1">
    <location>
        <position position="198"/>
    </location>
    <ligand>
        <name>chlorophyll a</name>
        <dbReference type="ChEBI" id="CHEBI:58416"/>
        <label>PD1</label>
    </ligand>
    <ligandPart>
        <name>Mg</name>
        <dbReference type="ChEBI" id="CHEBI:25107"/>
    </ligandPart>
</feature>
<feature type="binding site" evidence="1">
    <location>
        <position position="215"/>
    </location>
    <ligand>
        <name>a quinone</name>
        <dbReference type="ChEBI" id="CHEBI:132124"/>
        <label>B</label>
    </ligand>
</feature>
<feature type="binding site" evidence="1">
    <location>
        <position position="215"/>
    </location>
    <ligand>
        <name>Fe cation</name>
        <dbReference type="ChEBI" id="CHEBI:24875"/>
        <note>ligand shared with heterodimeric partner</note>
    </ligand>
</feature>
<feature type="binding site" evidence="1">
    <location>
        <begin position="264"/>
        <end position="265"/>
    </location>
    <ligand>
        <name>a quinone</name>
        <dbReference type="ChEBI" id="CHEBI:132124"/>
        <label>B</label>
    </ligand>
</feature>
<feature type="binding site" evidence="1">
    <location>
        <position position="272"/>
    </location>
    <ligand>
        <name>Fe cation</name>
        <dbReference type="ChEBI" id="CHEBI:24875"/>
        <note>ligand shared with heterodimeric partner</note>
    </ligand>
</feature>
<feature type="binding site" evidence="1">
    <location>
        <position position="332"/>
    </location>
    <ligand>
        <name>[CaMn4O5] cluster</name>
        <dbReference type="ChEBI" id="CHEBI:189552"/>
    </ligand>
</feature>
<feature type="binding site" evidence="1">
    <location>
        <position position="333"/>
    </location>
    <ligand>
        <name>[CaMn4O5] cluster</name>
        <dbReference type="ChEBI" id="CHEBI:189552"/>
    </ligand>
</feature>
<feature type="binding site" evidence="1">
    <location>
        <position position="342"/>
    </location>
    <ligand>
        <name>[CaMn4O5] cluster</name>
        <dbReference type="ChEBI" id="CHEBI:189552"/>
    </ligand>
</feature>
<feature type="binding site" evidence="1">
    <location>
        <position position="344"/>
    </location>
    <ligand>
        <name>[CaMn4O5] cluster</name>
        <dbReference type="ChEBI" id="CHEBI:189552"/>
    </ligand>
</feature>
<feature type="site" description="Tyrosine radical intermediate" evidence="1">
    <location>
        <position position="161"/>
    </location>
</feature>
<feature type="site" description="Stabilizes free radical intermediate" evidence="1">
    <location>
        <position position="190"/>
    </location>
</feature>
<feature type="site" description="Cleavage; by CTPA" evidence="1">
    <location>
        <begin position="344"/>
        <end position="345"/>
    </location>
</feature>
<feature type="modified residue" description="N-acetylthreonine" evidence="1">
    <location>
        <position position="2"/>
    </location>
</feature>
<feature type="modified residue" description="Phosphothreonine" evidence="1">
    <location>
        <position position="2"/>
    </location>
</feature>
<feature type="sequence variant" description="In cv. Borszczagowski.">
    <original>S</original>
    <variation>K</variation>
    <location>
        <position position="222"/>
    </location>
</feature>
<feature type="sequence variant" description="In cv. Borszczagowski.">
    <original>F</original>
    <variation>S</variation>
    <location>
        <position position="285"/>
    </location>
</feature>
<dbReference type="EC" id="1.10.3.9" evidence="1"/>
<dbReference type="EMBL" id="DQ119058">
    <property type="protein sequence ID" value="AAZ94632.1"/>
    <property type="molecule type" value="Genomic_DNA"/>
</dbReference>
<dbReference type="EMBL" id="AJ970307">
    <property type="protein sequence ID" value="CAJ00738.1"/>
    <property type="molecule type" value="Genomic_DNA"/>
</dbReference>
<dbReference type="EMBL" id="DQ865975">
    <property type="protein sequence ID" value="ABI97398.1"/>
    <property type="molecule type" value="Genomic_DNA"/>
</dbReference>
<dbReference type="EMBL" id="DQ865976">
    <property type="protein sequence ID" value="ABI98726.1"/>
    <property type="molecule type" value="Genomic_DNA"/>
</dbReference>
<dbReference type="RefSeq" id="YP_247579.1">
    <property type="nucleotide sequence ID" value="NC_007144.1"/>
</dbReference>
<dbReference type="SMR" id="Q2QDA8"/>
<dbReference type="GeneID" id="3429275"/>
<dbReference type="KEGG" id="csv:3429275"/>
<dbReference type="eggNOG" id="ENOG502QR09">
    <property type="taxonomic scope" value="Eukaryota"/>
</dbReference>
<dbReference type="OrthoDB" id="143at2759"/>
<dbReference type="GO" id="GO:0009535">
    <property type="term" value="C:chloroplast thylakoid membrane"/>
    <property type="evidence" value="ECO:0007669"/>
    <property type="project" value="UniProtKB-SubCell"/>
</dbReference>
<dbReference type="GO" id="GO:0009523">
    <property type="term" value="C:photosystem II"/>
    <property type="evidence" value="ECO:0007669"/>
    <property type="project" value="UniProtKB-KW"/>
</dbReference>
<dbReference type="GO" id="GO:0016168">
    <property type="term" value="F:chlorophyll binding"/>
    <property type="evidence" value="ECO:0007669"/>
    <property type="project" value="UniProtKB-UniRule"/>
</dbReference>
<dbReference type="GO" id="GO:0045156">
    <property type="term" value="F:electron transporter, transferring electrons within the cyclic electron transport pathway of photosynthesis activity"/>
    <property type="evidence" value="ECO:0007669"/>
    <property type="project" value="InterPro"/>
</dbReference>
<dbReference type="GO" id="GO:0005506">
    <property type="term" value="F:iron ion binding"/>
    <property type="evidence" value="ECO:0007669"/>
    <property type="project" value="UniProtKB-UniRule"/>
</dbReference>
<dbReference type="GO" id="GO:0016682">
    <property type="term" value="F:oxidoreductase activity, acting on diphenols and related substances as donors, oxygen as acceptor"/>
    <property type="evidence" value="ECO:0007669"/>
    <property type="project" value="UniProtKB-UniRule"/>
</dbReference>
<dbReference type="GO" id="GO:0010242">
    <property type="term" value="F:oxygen evolving activity"/>
    <property type="evidence" value="ECO:0007669"/>
    <property type="project" value="UniProtKB-EC"/>
</dbReference>
<dbReference type="GO" id="GO:0009772">
    <property type="term" value="P:photosynthetic electron transport in photosystem II"/>
    <property type="evidence" value="ECO:0007669"/>
    <property type="project" value="InterPro"/>
</dbReference>
<dbReference type="GO" id="GO:0009635">
    <property type="term" value="P:response to herbicide"/>
    <property type="evidence" value="ECO:0007669"/>
    <property type="project" value="UniProtKB-KW"/>
</dbReference>
<dbReference type="CDD" id="cd09289">
    <property type="entry name" value="Photosystem-II_D1"/>
    <property type="match status" value="1"/>
</dbReference>
<dbReference type="FunFam" id="1.20.85.10:FF:000002">
    <property type="entry name" value="Photosystem II protein D1"/>
    <property type="match status" value="1"/>
</dbReference>
<dbReference type="Gene3D" id="1.20.85.10">
    <property type="entry name" value="Photosystem II protein D1-like"/>
    <property type="match status" value="1"/>
</dbReference>
<dbReference type="HAMAP" id="MF_01379">
    <property type="entry name" value="PSII_PsbA_D1"/>
    <property type="match status" value="1"/>
</dbReference>
<dbReference type="InterPro" id="IPR055266">
    <property type="entry name" value="D1/D2"/>
</dbReference>
<dbReference type="InterPro" id="IPR036854">
    <property type="entry name" value="Photo_II_D1/D2_sf"/>
</dbReference>
<dbReference type="InterPro" id="IPR000484">
    <property type="entry name" value="Photo_RC_L/M"/>
</dbReference>
<dbReference type="InterPro" id="IPR055265">
    <property type="entry name" value="Photo_RC_L/M_CS"/>
</dbReference>
<dbReference type="InterPro" id="IPR005867">
    <property type="entry name" value="PSII_D1"/>
</dbReference>
<dbReference type="NCBIfam" id="TIGR01151">
    <property type="entry name" value="psbA"/>
    <property type="match status" value="1"/>
</dbReference>
<dbReference type="PANTHER" id="PTHR33149:SF12">
    <property type="entry name" value="PHOTOSYSTEM II D2 PROTEIN"/>
    <property type="match status" value="1"/>
</dbReference>
<dbReference type="PANTHER" id="PTHR33149">
    <property type="entry name" value="PHOTOSYSTEM II PROTEIN D1"/>
    <property type="match status" value="1"/>
</dbReference>
<dbReference type="Pfam" id="PF00124">
    <property type="entry name" value="Photo_RC"/>
    <property type="match status" value="1"/>
</dbReference>
<dbReference type="PRINTS" id="PR00256">
    <property type="entry name" value="REACTNCENTRE"/>
</dbReference>
<dbReference type="SUPFAM" id="SSF81483">
    <property type="entry name" value="Bacterial photosystem II reaction centre, L and M subunits"/>
    <property type="match status" value="1"/>
</dbReference>
<dbReference type="PROSITE" id="PS00244">
    <property type="entry name" value="REACTION_CENTER"/>
    <property type="match status" value="1"/>
</dbReference>
<proteinExistence type="inferred from homology"/>
<keyword id="KW-0007">Acetylation</keyword>
<keyword id="KW-0106">Calcium</keyword>
<keyword id="KW-0148">Chlorophyll</keyword>
<keyword id="KW-0150">Chloroplast</keyword>
<keyword id="KW-0157">Chromophore</keyword>
<keyword id="KW-0249">Electron transport</keyword>
<keyword id="KW-0359">Herbicide resistance</keyword>
<keyword id="KW-0408">Iron</keyword>
<keyword id="KW-0460">Magnesium</keyword>
<keyword id="KW-0464">Manganese</keyword>
<keyword id="KW-0472">Membrane</keyword>
<keyword id="KW-0479">Metal-binding</keyword>
<keyword id="KW-0560">Oxidoreductase</keyword>
<keyword id="KW-0597">Phosphoprotein</keyword>
<keyword id="KW-0602">Photosynthesis</keyword>
<keyword id="KW-0604">Photosystem II</keyword>
<keyword id="KW-0934">Plastid</keyword>
<keyword id="KW-0793">Thylakoid</keyword>
<keyword id="KW-0812">Transmembrane</keyword>
<keyword id="KW-1133">Transmembrane helix</keyword>
<keyword id="KW-0813">Transport</keyword>
<name>PSBA_CUCSA</name>
<organism>
    <name type="scientific">Cucumis sativus</name>
    <name type="common">Cucumber</name>
    <dbReference type="NCBI Taxonomy" id="3659"/>
    <lineage>
        <taxon>Eukaryota</taxon>
        <taxon>Viridiplantae</taxon>
        <taxon>Streptophyta</taxon>
        <taxon>Embryophyta</taxon>
        <taxon>Tracheophyta</taxon>
        <taxon>Spermatophyta</taxon>
        <taxon>Magnoliopsida</taxon>
        <taxon>eudicotyledons</taxon>
        <taxon>Gunneridae</taxon>
        <taxon>Pentapetalae</taxon>
        <taxon>rosids</taxon>
        <taxon>fabids</taxon>
        <taxon>Cucurbitales</taxon>
        <taxon>Cucurbitaceae</taxon>
        <taxon>Benincaseae</taxon>
        <taxon>Cucumis</taxon>
    </lineage>
</organism>
<reference key="1">
    <citation type="journal article" date="2006" name="Plant Cell Rep.">
        <title>Complete sequence and organization of the cucumber (Cucumis sativus L. cv. Baekmibaekdadagi) chloroplast genome.</title>
        <authorList>
            <person name="Kim J.-S."/>
            <person name="Jung J.D."/>
            <person name="Lee J.-A."/>
            <person name="Park H.-W."/>
            <person name="Oh K.-H."/>
            <person name="Jeong W.J."/>
            <person name="Choi D.-W."/>
            <person name="Liu J.R."/>
            <person name="Cho K.Y."/>
        </authorList>
    </citation>
    <scope>NUCLEOTIDE SEQUENCE [LARGE SCALE GENOMIC DNA]</scope>
    <source>
        <strain>cv. Baekmibaekdadagi</strain>
    </source>
</reference>
<reference key="2">
    <citation type="journal article" date="2007" name="Cell. Mol. Biol. Lett.">
        <title>The complete structure of the cucumber (Cucumis sativus L.) chloroplast genome: its composition and comparative analysis.</title>
        <authorList>
            <person name="Plader W.W."/>
            <person name="Yukawa Y."/>
            <person name="Sugiura M."/>
            <person name="Malepszy S."/>
        </authorList>
    </citation>
    <scope>NUCLEOTIDE SEQUENCE [LARGE SCALE GENOMIC DNA]</scope>
    <source>
        <strain>cv. Borszczagowski</strain>
    </source>
</reference>
<reference key="3">
    <citation type="journal article" date="2007" name="Genome">
        <title>Sequencing cucumber (Cucumis sativus L.) chloroplast genomes identifies differences between chilling-tolerant and -susceptible cucumber lines.</title>
        <authorList>
            <person name="Chung S.-M."/>
            <person name="Gordon V.S."/>
            <person name="Staub J.E."/>
        </authorList>
    </citation>
    <scope>NUCLEOTIDE SEQUENCE [LARGE SCALE GENOMIC DNA]</scope>
    <source>
        <strain>cv. Chipper</strain>
        <strain>cv. Gy14</strain>
    </source>
</reference>
<gene>
    <name evidence="1" type="primary">psbA</name>
</gene>
<comment type="function">
    <text evidence="1">Photosystem II (PSII) is a light-driven water:plastoquinone oxidoreductase that uses light energy to abstract electrons from H(2)O, generating O(2) and a proton gradient subsequently used for ATP formation. It consists of a core antenna complex that captures photons, and an electron transfer chain that converts photonic excitation into a charge separation. The D1/D2 (PsbA/PsbD) reaction center heterodimer binds P680, the primary electron donor of PSII as well as several subsequent electron acceptors.</text>
</comment>
<comment type="catalytic activity">
    <reaction evidence="1">
        <text>2 a plastoquinone + 4 hnu + 2 H2O = 2 a plastoquinol + O2</text>
        <dbReference type="Rhea" id="RHEA:36359"/>
        <dbReference type="Rhea" id="RHEA-COMP:9561"/>
        <dbReference type="Rhea" id="RHEA-COMP:9562"/>
        <dbReference type="ChEBI" id="CHEBI:15377"/>
        <dbReference type="ChEBI" id="CHEBI:15379"/>
        <dbReference type="ChEBI" id="CHEBI:17757"/>
        <dbReference type="ChEBI" id="CHEBI:30212"/>
        <dbReference type="ChEBI" id="CHEBI:62192"/>
        <dbReference type="EC" id="1.10.3.9"/>
    </reaction>
</comment>
<comment type="cofactor">
    <text evidence="1">The D1/D2 heterodimer binds P680, chlorophylls that are the primary electron donor of PSII, and subsequent electron acceptors. It shares a non-heme iron and each subunit binds pheophytin, quinone, additional chlorophylls, carotenoids and lipids. D1 provides most of the ligands for the Mn4-Ca-O5 cluster of the oxygen-evolving complex (OEC). There is also a Cl(-1) ion associated with D1 and D2, which is required for oxygen evolution. The PSII complex binds additional chlorophylls, carotenoids and specific lipids.</text>
</comment>
<comment type="subunit">
    <text evidence="1">PSII is composed of 1 copy each of membrane proteins PsbA, PsbB, PsbC, PsbD, PsbE, PsbF, PsbH, PsbI, PsbJ, PsbK, PsbL, PsbM, PsbT, PsbX, PsbY, PsbZ, Psb30/Ycf12, at least 3 peripheral proteins of the oxygen-evolving complex and a large number of cofactors. It forms dimeric complexes.</text>
</comment>
<comment type="subcellular location">
    <subcellularLocation>
        <location evidence="1">Plastid</location>
        <location evidence="1">Chloroplast thylakoid membrane</location>
        <topology evidence="1">Multi-pass membrane protein</topology>
    </subcellularLocation>
</comment>
<comment type="PTM">
    <text evidence="1">Tyr-161 forms a radical intermediate that is referred to as redox-active TyrZ, YZ or Y-Z.</text>
</comment>
<comment type="PTM">
    <text evidence="1">C-terminally processed by CTPA; processing is essential to allow assembly of the oxygen-evolving complex and thus photosynthetic growth.</text>
</comment>
<comment type="miscellaneous">
    <text evidence="1">2 of the reaction center chlorophylls (ChlD1 and ChlD2) are entirely coordinated by water.</text>
</comment>
<comment type="miscellaneous">
    <text evidence="1">Herbicides such as atrazine, BNT, diuron or ioxynil bind in the Q(B) binding site and block subsequent electron transfer.</text>
</comment>
<comment type="similarity">
    <text evidence="1">Belongs to the reaction center PufL/M/PsbA/D family.</text>
</comment>
<accession>Q2QDA8</accession>
<accession>Q4VZQ3</accession>
<evidence type="ECO:0000255" key="1">
    <source>
        <dbReference type="HAMAP-Rule" id="MF_01379"/>
    </source>
</evidence>
<geneLocation type="chloroplast"/>